<protein>
    <recommendedName>
        <fullName evidence="1">Pyrrolidone-carboxylate peptidase 1</fullName>
        <ecNumber evidence="1">3.4.19.3</ecNumber>
    </recommendedName>
    <alternativeName>
        <fullName evidence="1">5-oxoprolyl-peptidase 1</fullName>
    </alternativeName>
    <alternativeName>
        <fullName evidence="1">Pyroglutamyl-peptidase I 1</fullName>
        <shortName evidence="1">PGP-I 1</shortName>
        <shortName evidence="1">Pyrase 1</shortName>
    </alternativeName>
</protein>
<reference key="1">
    <citation type="journal article" date="2002" name="Genome Res.">
        <title>A complete sequence of the T. tengcongensis genome.</title>
        <authorList>
            <person name="Bao Q."/>
            <person name="Tian Y."/>
            <person name="Li W."/>
            <person name="Xu Z."/>
            <person name="Xuan Z."/>
            <person name="Hu S."/>
            <person name="Dong W."/>
            <person name="Yang J."/>
            <person name="Chen Y."/>
            <person name="Xue Y."/>
            <person name="Xu Y."/>
            <person name="Lai X."/>
            <person name="Huang L."/>
            <person name="Dong X."/>
            <person name="Ma Y."/>
            <person name="Ling L."/>
            <person name="Tan H."/>
            <person name="Chen R."/>
            <person name="Wang J."/>
            <person name="Yu J."/>
            <person name="Yang H."/>
        </authorList>
    </citation>
    <scope>NUCLEOTIDE SEQUENCE [LARGE SCALE GENOMIC DNA]</scope>
    <source>
        <strain>DSM 15242 / JCM 11007 / NBRC 100824 / MB4</strain>
    </source>
</reference>
<proteinExistence type="inferred from homology"/>
<keyword id="KW-0963">Cytoplasm</keyword>
<keyword id="KW-0378">Hydrolase</keyword>
<keyword id="KW-0645">Protease</keyword>
<keyword id="KW-1185">Reference proteome</keyword>
<keyword id="KW-0788">Thiol protease</keyword>
<name>PCP1_CALS4</name>
<gene>
    <name evidence="1" type="primary">pcp1</name>
    <name type="ordered locus">TTE0678</name>
</gene>
<sequence>MKILVTAFDPFGGESVNPSYEVLKNLKDNIEGAEIIKLQVPTAFYVSVEKAIEKIKEVNPDAVLSIGQAGGRYDISVERVAINIDDARIPDNMGQQPIDIPIDPEGPPAYFATIPIKEIVEAIKKENLPASVSNSAGTYVCNHLMYGILNYIHKNKLNIKAGFIHIPYLPEQVLEKPNTPYMSLSDMVKAIETAIKVIVKAMA</sequence>
<dbReference type="EC" id="3.4.19.3" evidence="1"/>
<dbReference type="EMBL" id="AE008691">
    <property type="protein sequence ID" value="AAM23942.1"/>
    <property type="molecule type" value="Genomic_DNA"/>
</dbReference>
<dbReference type="RefSeq" id="WP_011025084.1">
    <property type="nucleotide sequence ID" value="NC_003869.1"/>
</dbReference>
<dbReference type="SMR" id="Q8RBX8"/>
<dbReference type="STRING" id="273068.TTE0678"/>
<dbReference type="MEROPS" id="C15.001"/>
<dbReference type="KEGG" id="tte:TTE0678"/>
<dbReference type="eggNOG" id="COG2039">
    <property type="taxonomic scope" value="Bacteria"/>
</dbReference>
<dbReference type="HOGENOM" id="CLU_043960_4_0_9"/>
<dbReference type="OrthoDB" id="9779738at2"/>
<dbReference type="Proteomes" id="UP000000555">
    <property type="component" value="Chromosome"/>
</dbReference>
<dbReference type="GO" id="GO:0005829">
    <property type="term" value="C:cytosol"/>
    <property type="evidence" value="ECO:0007669"/>
    <property type="project" value="InterPro"/>
</dbReference>
<dbReference type="GO" id="GO:0016920">
    <property type="term" value="F:pyroglutamyl-peptidase activity"/>
    <property type="evidence" value="ECO:0007669"/>
    <property type="project" value="UniProtKB-UniRule"/>
</dbReference>
<dbReference type="GO" id="GO:0006508">
    <property type="term" value="P:proteolysis"/>
    <property type="evidence" value="ECO:0007669"/>
    <property type="project" value="UniProtKB-KW"/>
</dbReference>
<dbReference type="CDD" id="cd00501">
    <property type="entry name" value="Peptidase_C15"/>
    <property type="match status" value="1"/>
</dbReference>
<dbReference type="FunFam" id="3.40.630.20:FF:000001">
    <property type="entry name" value="Pyrrolidone-carboxylate peptidase"/>
    <property type="match status" value="1"/>
</dbReference>
<dbReference type="Gene3D" id="3.40.630.20">
    <property type="entry name" value="Peptidase C15, pyroglutamyl peptidase I-like"/>
    <property type="match status" value="1"/>
</dbReference>
<dbReference type="HAMAP" id="MF_00417">
    <property type="entry name" value="Pyrrolid_peptidase"/>
    <property type="match status" value="1"/>
</dbReference>
<dbReference type="InterPro" id="IPR000816">
    <property type="entry name" value="Peptidase_C15"/>
</dbReference>
<dbReference type="InterPro" id="IPR016125">
    <property type="entry name" value="Peptidase_C15-like"/>
</dbReference>
<dbReference type="InterPro" id="IPR036440">
    <property type="entry name" value="Peptidase_C15-like_sf"/>
</dbReference>
<dbReference type="InterPro" id="IPR029762">
    <property type="entry name" value="PGP-I_bact-type"/>
</dbReference>
<dbReference type="InterPro" id="IPR033694">
    <property type="entry name" value="PGPEP1_Cys_AS"/>
</dbReference>
<dbReference type="InterPro" id="IPR033693">
    <property type="entry name" value="PGPEP1_Glu_AS"/>
</dbReference>
<dbReference type="NCBIfam" id="NF009676">
    <property type="entry name" value="PRK13197.1"/>
    <property type="match status" value="1"/>
</dbReference>
<dbReference type="NCBIfam" id="TIGR00504">
    <property type="entry name" value="pyro_pdase"/>
    <property type="match status" value="1"/>
</dbReference>
<dbReference type="PANTHER" id="PTHR23402">
    <property type="entry name" value="PROTEASE FAMILY C15 PYROGLUTAMYL-PEPTIDASE I-RELATED"/>
    <property type="match status" value="1"/>
</dbReference>
<dbReference type="PANTHER" id="PTHR23402:SF1">
    <property type="entry name" value="PYROGLUTAMYL-PEPTIDASE I"/>
    <property type="match status" value="1"/>
</dbReference>
<dbReference type="Pfam" id="PF01470">
    <property type="entry name" value="Peptidase_C15"/>
    <property type="match status" value="1"/>
</dbReference>
<dbReference type="PIRSF" id="PIRSF015592">
    <property type="entry name" value="Prld-crbxl_pptds"/>
    <property type="match status" value="1"/>
</dbReference>
<dbReference type="PRINTS" id="PR00706">
    <property type="entry name" value="PYROGLUPTASE"/>
</dbReference>
<dbReference type="SUPFAM" id="SSF53182">
    <property type="entry name" value="Pyrrolidone carboxyl peptidase (pyroglutamate aminopeptidase)"/>
    <property type="match status" value="1"/>
</dbReference>
<dbReference type="PROSITE" id="PS01334">
    <property type="entry name" value="PYRASE_CYS"/>
    <property type="match status" value="1"/>
</dbReference>
<dbReference type="PROSITE" id="PS01333">
    <property type="entry name" value="PYRASE_GLU"/>
    <property type="match status" value="1"/>
</dbReference>
<evidence type="ECO:0000255" key="1">
    <source>
        <dbReference type="HAMAP-Rule" id="MF_00417"/>
    </source>
</evidence>
<feature type="chain" id="PRO_0000184746" description="Pyrrolidone-carboxylate peptidase 1">
    <location>
        <begin position="1"/>
        <end position="203"/>
    </location>
</feature>
<feature type="active site" evidence="1">
    <location>
        <position position="78"/>
    </location>
</feature>
<feature type="active site" evidence="1">
    <location>
        <position position="141"/>
    </location>
</feature>
<feature type="active site" evidence="1">
    <location>
        <position position="165"/>
    </location>
</feature>
<accession>Q8RBX8</accession>
<comment type="function">
    <text evidence="1">Removes 5-oxoproline from various penultimate amino acid residues except L-proline.</text>
</comment>
<comment type="catalytic activity">
    <reaction evidence="1">
        <text>Release of an N-terminal pyroglutamyl group from a polypeptide, the second amino acid generally not being Pro.</text>
        <dbReference type="EC" id="3.4.19.3"/>
    </reaction>
</comment>
<comment type="subunit">
    <text evidence="1">Homotetramer.</text>
</comment>
<comment type="subcellular location">
    <subcellularLocation>
        <location evidence="1">Cytoplasm</location>
    </subcellularLocation>
</comment>
<comment type="similarity">
    <text evidence="1">Belongs to the peptidase C15 family.</text>
</comment>
<organism>
    <name type="scientific">Caldanaerobacter subterraneus subsp. tengcongensis (strain DSM 15242 / JCM 11007 / NBRC 100824 / MB4)</name>
    <name type="common">Thermoanaerobacter tengcongensis</name>
    <dbReference type="NCBI Taxonomy" id="273068"/>
    <lineage>
        <taxon>Bacteria</taxon>
        <taxon>Bacillati</taxon>
        <taxon>Bacillota</taxon>
        <taxon>Clostridia</taxon>
        <taxon>Thermoanaerobacterales</taxon>
        <taxon>Thermoanaerobacteraceae</taxon>
        <taxon>Caldanaerobacter</taxon>
    </lineage>
</organism>